<sequence>MAGPTLLKESGPREVFCGLTSIVWLHRRMPDAFFLVVGSRTCAHLIQSAAGVMIFAEPRFGTAILSERDLAGLADAHEELDRVARELLQRRPEIRTLFLVGSCPSEVIKLDLARAAERLNDELQGRVRVVNYSGSGIETTFTQGEDGALAALVPLLPSSAERQLLLVGTLADAVEDRLIHLFGRLGIDRVRSLPPRQSTALPPVGPGTTVLLTQPFLTDTARLLRNRGATVLTAPFPLGAEGSRRWMEAAAQAFEVAPSHVATVLDPLMERARIALEPHREVLAGKRIFLLPESQLELPLARFLQRECGMELVEVGTPYLNREQMAEELALLPEGTPVMEGQHVELQLDRVRDSAPDLVVCGMGLANPLEAEGIATKWSIELVFSPIHGIDQAGDLAELFSRPLRRRQLIHPGLHPTQPDQPVHA</sequence>
<accession>Q7U5I4</accession>
<organism>
    <name type="scientific">Parasynechococcus marenigrum (strain WH8102)</name>
    <dbReference type="NCBI Taxonomy" id="84588"/>
    <lineage>
        <taxon>Bacteria</taxon>
        <taxon>Bacillati</taxon>
        <taxon>Cyanobacteriota</taxon>
        <taxon>Cyanophyceae</taxon>
        <taxon>Synechococcales</taxon>
        <taxon>Prochlorococcaceae</taxon>
        <taxon>Parasynechococcus</taxon>
        <taxon>Parasynechococcus marenigrum</taxon>
    </lineage>
</organism>
<feature type="chain" id="PRO_0000324033" description="Light-independent protochlorophyllide reductase subunit N">
    <location>
        <begin position="1"/>
        <end position="425"/>
    </location>
</feature>
<feature type="binding site" evidence="1">
    <location>
        <position position="17"/>
    </location>
    <ligand>
        <name>[4Fe-4S] cluster</name>
        <dbReference type="ChEBI" id="CHEBI:49883"/>
        <note>ligand shared with heterodimeric partner</note>
    </ligand>
</feature>
<feature type="binding site" evidence="1">
    <location>
        <position position="42"/>
    </location>
    <ligand>
        <name>[4Fe-4S] cluster</name>
        <dbReference type="ChEBI" id="CHEBI:49883"/>
        <note>ligand shared with heterodimeric partner</note>
    </ligand>
</feature>
<feature type="binding site" evidence="1">
    <location>
        <position position="103"/>
    </location>
    <ligand>
        <name>[4Fe-4S] cluster</name>
        <dbReference type="ChEBI" id="CHEBI:49883"/>
        <note>ligand shared with heterodimeric partner</note>
    </ligand>
</feature>
<comment type="function">
    <text evidence="1">Component of the dark-operative protochlorophyllide reductase (DPOR) that uses Mg-ATP and reduced ferredoxin to reduce ring D of protochlorophyllide (Pchlide) to form chlorophyllide a (Chlide). This reaction is light-independent. The NB-protein (ChlN-ChlB) is the catalytic component of the complex.</text>
</comment>
<comment type="catalytic activity">
    <reaction evidence="1">
        <text>chlorophyllide a + oxidized 2[4Fe-4S]-[ferredoxin] + 2 ADP + 2 phosphate = protochlorophyllide a + reduced 2[4Fe-4S]-[ferredoxin] + 2 ATP + 2 H2O</text>
        <dbReference type="Rhea" id="RHEA:28202"/>
        <dbReference type="Rhea" id="RHEA-COMP:10002"/>
        <dbReference type="Rhea" id="RHEA-COMP:10004"/>
        <dbReference type="ChEBI" id="CHEBI:15377"/>
        <dbReference type="ChEBI" id="CHEBI:30616"/>
        <dbReference type="ChEBI" id="CHEBI:33722"/>
        <dbReference type="ChEBI" id="CHEBI:33723"/>
        <dbReference type="ChEBI" id="CHEBI:43474"/>
        <dbReference type="ChEBI" id="CHEBI:83348"/>
        <dbReference type="ChEBI" id="CHEBI:83350"/>
        <dbReference type="ChEBI" id="CHEBI:456216"/>
        <dbReference type="EC" id="1.3.7.7"/>
    </reaction>
</comment>
<comment type="cofactor">
    <cofactor evidence="1">
        <name>[4Fe-4S] cluster</name>
        <dbReference type="ChEBI" id="CHEBI:49883"/>
    </cofactor>
    <text evidence="1">Binds 1 [4Fe-4S] cluster per heterodimer. The cluster is bound at the heterodimer interface by residues from both subunits.</text>
</comment>
<comment type="pathway">
    <text evidence="1">Porphyrin-containing compound metabolism; chlorophyll biosynthesis (light-independent).</text>
</comment>
<comment type="subunit">
    <text evidence="1">Protochlorophyllide reductase is composed of three subunits; ChlL, ChlN and ChlB. Forms a heterotetramer of two ChlB and two ChlN subunits.</text>
</comment>
<comment type="similarity">
    <text evidence="1">Belongs to the BchN/ChlN family.</text>
</comment>
<proteinExistence type="inferred from homology"/>
<gene>
    <name evidence="1" type="primary">chlN</name>
    <name type="ordered locus">SYNW1723</name>
</gene>
<reference key="1">
    <citation type="journal article" date="2003" name="Nature">
        <title>The genome of a motile marine Synechococcus.</title>
        <authorList>
            <person name="Palenik B."/>
            <person name="Brahamsha B."/>
            <person name="Larimer F.W."/>
            <person name="Land M.L."/>
            <person name="Hauser L."/>
            <person name="Chain P."/>
            <person name="Lamerdin J.E."/>
            <person name="Regala W."/>
            <person name="Allen E.E."/>
            <person name="McCarren J."/>
            <person name="Paulsen I.T."/>
            <person name="Dufresne A."/>
            <person name="Partensky F."/>
            <person name="Webb E.A."/>
            <person name="Waterbury J."/>
        </authorList>
    </citation>
    <scope>NUCLEOTIDE SEQUENCE [LARGE SCALE GENOMIC DNA]</scope>
    <source>
        <strain>WH8102</strain>
    </source>
</reference>
<evidence type="ECO:0000255" key="1">
    <source>
        <dbReference type="HAMAP-Rule" id="MF_00352"/>
    </source>
</evidence>
<protein>
    <recommendedName>
        <fullName evidence="1">Light-independent protochlorophyllide reductase subunit N</fullName>
        <shortName evidence="1">DPOR subunit N</shortName>
        <shortName evidence="1">LI-POR subunit N</shortName>
        <ecNumber evidence="1">1.3.7.7</ecNumber>
    </recommendedName>
</protein>
<keyword id="KW-0004">4Fe-4S</keyword>
<keyword id="KW-0067">ATP-binding</keyword>
<keyword id="KW-0149">Chlorophyll biosynthesis</keyword>
<keyword id="KW-0408">Iron</keyword>
<keyword id="KW-0411">Iron-sulfur</keyword>
<keyword id="KW-0479">Metal-binding</keyword>
<keyword id="KW-0547">Nucleotide-binding</keyword>
<keyword id="KW-0560">Oxidoreductase</keyword>
<keyword id="KW-0602">Photosynthesis</keyword>
<name>CHLN_PARMW</name>
<dbReference type="EC" id="1.3.7.7" evidence="1"/>
<dbReference type="EMBL" id="BX569693">
    <property type="protein sequence ID" value="CAE08238.1"/>
    <property type="molecule type" value="Genomic_DNA"/>
</dbReference>
<dbReference type="RefSeq" id="WP_011128583.1">
    <property type="nucleotide sequence ID" value="NC_005070.1"/>
</dbReference>
<dbReference type="SMR" id="Q7U5I4"/>
<dbReference type="STRING" id="84588.SYNW1723"/>
<dbReference type="KEGG" id="syw:SYNW1723"/>
<dbReference type="eggNOG" id="COG2710">
    <property type="taxonomic scope" value="Bacteria"/>
</dbReference>
<dbReference type="HOGENOM" id="CLU_037170_0_0_3"/>
<dbReference type="UniPathway" id="UPA00670"/>
<dbReference type="Proteomes" id="UP000001422">
    <property type="component" value="Chromosome"/>
</dbReference>
<dbReference type="GO" id="GO:0051539">
    <property type="term" value="F:4 iron, 4 sulfur cluster binding"/>
    <property type="evidence" value="ECO:0007669"/>
    <property type="project" value="UniProtKB-UniRule"/>
</dbReference>
<dbReference type="GO" id="GO:0005524">
    <property type="term" value="F:ATP binding"/>
    <property type="evidence" value="ECO:0007669"/>
    <property type="project" value="UniProtKB-UniRule"/>
</dbReference>
<dbReference type="GO" id="GO:0046872">
    <property type="term" value="F:metal ion binding"/>
    <property type="evidence" value="ECO:0007669"/>
    <property type="project" value="UniProtKB-KW"/>
</dbReference>
<dbReference type="GO" id="GO:0016730">
    <property type="term" value="F:oxidoreductase activity, acting on iron-sulfur proteins as donors"/>
    <property type="evidence" value="ECO:0007669"/>
    <property type="project" value="InterPro"/>
</dbReference>
<dbReference type="GO" id="GO:0016636">
    <property type="term" value="F:oxidoreductase activity, acting on the CH-CH group of donors, iron-sulfur protein as acceptor"/>
    <property type="evidence" value="ECO:0007669"/>
    <property type="project" value="UniProtKB-UniRule"/>
</dbReference>
<dbReference type="GO" id="GO:0036068">
    <property type="term" value="P:light-independent chlorophyll biosynthetic process"/>
    <property type="evidence" value="ECO:0007669"/>
    <property type="project" value="UniProtKB-UniRule"/>
</dbReference>
<dbReference type="GO" id="GO:0019685">
    <property type="term" value="P:photosynthesis, dark reaction"/>
    <property type="evidence" value="ECO:0007669"/>
    <property type="project" value="InterPro"/>
</dbReference>
<dbReference type="Gene3D" id="3.40.50.1980">
    <property type="entry name" value="Nitrogenase molybdenum iron protein domain"/>
    <property type="match status" value="3"/>
</dbReference>
<dbReference type="HAMAP" id="MF_00352">
    <property type="entry name" value="ChlN_BchN"/>
    <property type="match status" value="1"/>
</dbReference>
<dbReference type="InterPro" id="IPR050293">
    <property type="entry name" value="LIPOR_BchN/ChlN"/>
</dbReference>
<dbReference type="InterPro" id="IPR000510">
    <property type="entry name" value="Nase/OxRdtase_comp1"/>
</dbReference>
<dbReference type="InterPro" id="IPR005970">
    <property type="entry name" value="Protochl_reductN"/>
</dbReference>
<dbReference type="NCBIfam" id="TIGR01279">
    <property type="entry name" value="DPOR_bchN"/>
    <property type="match status" value="1"/>
</dbReference>
<dbReference type="NCBIfam" id="NF002768">
    <property type="entry name" value="PRK02842.1"/>
    <property type="match status" value="1"/>
</dbReference>
<dbReference type="PANTHER" id="PTHR39429">
    <property type="entry name" value="LIGHT-INDEPENDENT PROTOCHLOROPHYLLIDE REDUCTASE SUBUNIT N"/>
    <property type="match status" value="1"/>
</dbReference>
<dbReference type="PANTHER" id="PTHR39429:SF3">
    <property type="entry name" value="LIGHT-INDEPENDENT PROTOCHLOROPHYLLIDE REDUCTASE SUBUNIT N"/>
    <property type="match status" value="1"/>
</dbReference>
<dbReference type="Pfam" id="PF00148">
    <property type="entry name" value="Oxidored_nitro"/>
    <property type="match status" value="1"/>
</dbReference>
<dbReference type="PIRSF" id="PIRSF000162">
    <property type="entry name" value="P_chlorophyll_rd"/>
    <property type="match status" value="1"/>
</dbReference>
<dbReference type="SUPFAM" id="SSF53807">
    <property type="entry name" value="Helical backbone' metal receptor"/>
    <property type="match status" value="1"/>
</dbReference>